<accession>Q95JK3</accession>
<dbReference type="EMBL" id="AB070178">
    <property type="protein sequence ID" value="BAB63123.1"/>
    <property type="molecule type" value="mRNA"/>
</dbReference>
<dbReference type="RefSeq" id="NP_001270801.1">
    <property type="nucleotide sequence ID" value="NM_001283872.1"/>
</dbReference>
<dbReference type="RefSeq" id="XP_045233163.1">
    <property type="nucleotide sequence ID" value="XM_045377228.2"/>
</dbReference>
<dbReference type="SMR" id="Q95JK3"/>
<dbReference type="STRING" id="9541.ENSMFAP00000042121"/>
<dbReference type="GeneID" id="102125930"/>
<dbReference type="VEuPathDB" id="HostDB:ENSMFAG00000039854"/>
<dbReference type="eggNOG" id="ENOG502S6IZ">
    <property type="taxonomic scope" value="Eukaryota"/>
</dbReference>
<dbReference type="OMA" id="QNEWSIW"/>
<dbReference type="Proteomes" id="UP000233100">
    <property type="component" value="Chromosome 17"/>
</dbReference>
<dbReference type="CDD" id="cd07429">
    <property type="entry name" value="Cby_like"/>
    <property type="match status" value="1"/>
</dbReference>
<dbReference type="InterPro" id="IPR028118">
    <property type="entry name" value="Chibby_fam"/>
</dbReference>
<dbReference type="PANTHER" id="PTHR21533">
    <property type="entry name" value="LEUCINE-RICH PROTEIN"/>
    <property type="match status" value="1"/>
</dbReference>
<dbReference type="PANTHER" id="PTHR21533:SF13">
    <property type="entry name" value="PROTEIN CHIBBY HOMOLOG 2"/>
    <property type="match status" value="1"/>
</dbReference>
<dbReference type="Pfam" id="PF14645">
    <property type="entry name" value="Chibby"/>
    <property type="match status" value="1"/>
</dbReference>
<proteinExistence type="evidence at transcript level"/>
<sequence length="448" mass="51560">MSPLECSECFGDQLLHRTYTWQLTLHSRPNFTRKRDTRSESLEIPINVVLPQRGTAEPFPRLHNLHSIPRCAQQAALPRLSRRMASQHSYPLNRFSSVPLDPMERPMSQADLELDYNPPRVQLSDEMFVFQDGRWVNENCRLQSPYFSPSASFHHKLHHKRLAKEFVLQEENKSLREENKALREENRMLRKENKILQVFWEEHKASLGREESRPPSPLPQKDSASLEVVKKDHVALQVPRGKEDSTLQLLREENRALQQLLEQKQAYWTQTEDAAAPAEESKPAPSPHEEPCSPGLLQDQGSGLSSHFEEPRGPPAPQEDSKTLRALREMVSNMSGPSGEEEAKAGPGLPDGCQPLQLLREMRQALQALLKENRLLQEENRTLQVLRAEHRGFQEENKALWENNKLKLQQKLVIDTVTEVTARMEMLIEELYAFMPGRSQDPKKPSRV</sequence>
<keyword id="KW-0175">Coiled coil</keyword>
<keyword id="KW-0597">Phosphoprotein</keyword>
<keyword id="KW-1185">Reference proteome</keyword>
<comment type="subunit">
    <text evidence="1">Homodimer. Binds to NEK1 (By similarity).</text>
</comment>
<comment type="similarity">
    <text evidence="5">Belongs to the chibby family. SPERT subfamily.</text>
</comment>
<name>CBY2_MACFA</name>
<reference key="1">
    <citation type="journal article" date="2002" name="BMC Genomics">
        <title>Cynomolgus monkey testicular cDNAs for discovery of novel human genes in the human genome sequence.</title>
        <authorList>
            <person name="Osada N."/>
            <person name="Hida M."/>
            <person name="Kusuda J."/>
            <person name="Tanuma R."/>
            <person name="Hirata M."/>
            <person name="Suto Y."/>
            <person name="Hirai M."/>
            <person name="Terao K."/>
            <person name="Sugano S."/>
            <person name="Hashimoto K."/>
        </authorList>
    </citation>
    <scope>NUCLEOTIDE SEQUENCE [LARGE SCALE MRNA]</scope>
    <source>
        <tissue>Testis</tissue>
    </source>
</reference>
<protein>
    <recommendedName>
        <fullName evidence="5">Protein chibby homolog 2</fullName>
    </recommendedName>
    <alternativeName>
        <fullName>Spermatid-associated protein</fullName>
    </alternativeName>
</protein>
<evidence type="ECO:0000250" key="1"/>
<evidence type="ECO:0000250" key="2">
    <source>
        <dbReference type="UniProtKB" id="Q6AXV6"/>
    </source>
</evidence>
<evidence type="ECO:0000255" key="3"/>
<evidence type="ECO:0000256" key="4">
    <source>
        <dbReference type="SAM" id="MobiDB-lite"/>
    </source>
</evidence>
<evidence type="ECO:0000305" key="5"/>
<organism>
    <name type="scientific">Macaca fascicularis</name>
    <name type="common">Crab-eating macaque</name>
    <name type="synonym">Cynomolgus monkey</name>
    <dbReference type="NCBI Taxonomy" id="9541"/>
    <lineage>
        <taxon>Eukaryota</taxon>
        <taxon>Metazoa</taxon>
        <taxon>Chordata</taxon>
        <taxon>Craniata</taxon>
        <taxon>Vertebrata</taxon>
        <taxon>Euteleostomi</taxon>
        <taxon>Mammalia</taxon>
        <taxon>Eutheria</taxon>
        <taxon>Euarchontoglires</taxon>
        <taxon>Primates</taxon>
        <taxon>Haplorrhini</taxon>
        <taxon>Catarrhini</taxon>
        <taxon>Cercopithecidae</taxon>
        <taxon>Cercopithecinae</taxon>
        <taxon>Macaca</taxon>
    </lineage>
</organism>
<feature type="chain" id="PRO_0000307292" description="Protein chibby homolog 2">
    <location>
        <begin position="1"/>
        <end position="448"/>
    </location>
</feature>
<feature type="region of interest" description="Disordered" evidence="4">
    <location>
        <begin position="206"/>
        <end position="226"/>
    </location>
</feature>
<feature type="region of interest" description="Disordered" evidence="4">
    <location>
        <begin position="270"/>
        <end position="321"/>
    </location>
</feature>
<feature type="coiled-coil region" evidence="3">
    <location>
        <begin position="163"/>
        <end position="198"/>
    </location>
</feature>
<feature type="coiled-coil region" evidence="3">
    <location>
        <begin position="242"/>
        <end position="267"/>
    </location>
</feature>
<feature type="coiled-coil region" evidence="3">
    <location>
        <begin position="356"/>
        <end position="414"/>
    </location>
</feature>
<feature type="compositionally biased region" description="Basic and acidic residues" evidence="4">
    <location>
        <begin position="279"/>
        <end position="291"/>
    </location>
</feature>
<feature type="modified residue" description="Phosphoserine" evidence="2">
    <location>
        <position position="41"/>
    </location>
</feature>
<feature type="modified residue" description="Phosphoserine" evidence="2">
    <location>
        <position position="86"/>
    </location>
</feature>
<feature type="modified residue" description="Phosphoserine" evidence="2">
    <location>
        <position position="89"/>
    </location>
</feature>
<feature type="modified residue" description="Phosphoserine" evidence="2">
    <location>
        <position position="97"/>
    </location>
</feature>
<feature type="modified residue" description="Phosphoserine" evidence="2">
    <location>
        <position position="124"/>
    </location>
</feature>
<feature type="modified residue" description="Phosphoserine" evidence="2">
    <location>
        <position position="144"/>
    </location>
</feature>
<feature type="modified residue" description="Phosphoserine" evidence="2">
    <location>
        <position position="148"/>
    </location>
</feature>
<feature type="modified residue" description="Phosphoserine" evidence="2">
    <location>
        <position position="150"/>
    </location>
</feature>
<feature type="modified residue" description="Phosphoserine" evidence="2">
    <location>
        <position position="212"/>
    </location>
</feature>
<feature type="modified residue" description="Phosphoserine" evidence="2">
    <location>
        <position position="225"/>
    </location>
</feature>
<feature type="modified residue" description="Phosphoserine" evidence="2">
    <location>
        <position position="335"/>
    </location>
</feature>
<feature type="modified residue" description="Phosphoserine" evidence="2">
    <location>
        <position position="338"/>
    </location>
</feature>
<gene>
    <name type="primary">CBY2</name>
    <name type="synonym">SPERT</name>
    <name type="ORF">QtsA-16496</name>
</gene>